<organism>
    <name type="scientific">Pseudomonas fluorescens (strain Pf0-1)</name>
    <dbReference type="NCBI Taxonomy" id="205922"/>
    <lineage>
        <taxon>Bacteria</taxon>
        <taxon>Pseudomonadati</taxon>
        <taxon>Pseudomonadota</taxon>
        <taxon>Gammaproteobacteria</taxon>
        <taxon>Pseudomonadales</taxon>
        <taxon>Pseudomonadaceae</taxon>
        <taxon>Pseudomonas</taxon>
    </lineage>
</organism>
<sequence length="188" mass="21174">MSIKSDKWIRRMAQEHGMIEPFVERQVRGSDDSRVISYGVSSYGYDVRCTNHFKVFTNINSAIVDPKNFDAGSFVDVHSDVCIIPPNSFALATTVEYFRIPRNVLTICLGKSTYARCGIIVNVTPLEPEWEGQVTLEFSNTTNLPAKIYANEGVAQMLFLESDEECEVSYKDRAGKYQGQRGVTLPRT</sequence>
<protein>
    <recommendedName>
        <fullName evidence="1">dCTP deaminase</fullName>
        <ecNumber evidence="1">3.5.4.13</ecNumber>
    </recommendedName>
    <alternativeName>
        <fullName evidence="1">Deoxycytidine triphosphate deaminase</fullName>
    </alternativeName>
</protein>
<gene>
    <name evidence="1" type="primary">dcd</name>
    <name type="ordered locus">Pfl01_1202</name>
</gene>
<reference key="1">
    <citation type="journal article" date="2009" name="Genome Biol.">
        <title>Genomic and genetic analyses of diversity and plant interactions of Pseudomonas fluorescens.</title>
        <authorList>
            <person name="Silby M.W."/>
            <person name="Cerdeno-Tarraga A.M."/>
            <person name="Vernikos G.S."/>
            <person name="Giddens S.R."/>
            <person name="Jackson R.W."/>
            <person name="Preston G.M."/>
            <person name="Zhang X.-X."/>
            <person name="Moon C.D."/>
            <person name="Gehrig S.M."/>
            <person name="Godfrey S.A.C."/>
            <person name="Knight C.G."/>
            <person name="Malone J.G."/>
            <person name="Robinson Z."/>
            <person name="Spiers A.J."/>
            <person name="Harris S."/>
            <person name="Challis G.L."/>
            <person name="Yaxley A.M."/>
            <person name="Harris D."/>
            <person name="Seeger K."/>
            <person name="Murphy L."/>
            <person name="Rutter S."/>
            <person name="Squares R."/>
            <person name="Quail M.A."/>
            <person name="Saunders E."/>
            <person name="Mavromatis K."/>
            <person name="Brettin T.S."/>
            <person name="Bentley S.D."/>
            <person name="Hothersall J."/>
            <person name="Stephens E."/>
            <person name="Thomas C.M."/>
            <person name="Parkhill J."/>
            <person name="Levy S.B."/>
            <person name="Rainey P.B."/>
            <person name="Thomson N.R."/>
        </authorList>
    </citation>
    <scope>NUCLEOTIDE SEQUENCE [LARGE SCALE GENOMIC DNA]</scope>
    <source>
        <strain>Pf0-1</strain>
    </source>
</reference>
<dbReference type="EC" id="3.5.4.13" evidence="1"/>
<dbReference type="EMBL" id="CP000094">
    <property type="protein sequence ID" value="ABA72945.1"/>
    <property type="molecule type" value="Genomic_DNA"/>
</dbReference>
<dbReference type="RefSeq" id="WP_007954988.1">
    <property type="nucleotide sequence ID" value="NC_007492.2"/>
</dbReference>
<dbReference type="SMR" id="Q3KH11"/>
<dbReference type="KEGG" id="pfo:Pfl01_1202"/>
<dbReference type="eggNOG" id="COG0717">
    <property type="taxonomic scope" value="Bacteria"/>
</dbReference>
<dbReference type="HOGENOM" id="CLU_087476_4_0_6"/>
<dbReference type="UniPathway" id="UPA00610">
    <property type="reaction ID" value="UER00665"/>
</dbReference>
<dbReference type="Proteomes" id="UP000002704">
    <property type="component" value="Chromosome"/>
</dbReference>
<dbReference type="GO" id="GO:0008829">
    <property type="term" value="F:dCTP deaminase activity"/>
    <property type="evidence" value="ECO:0007669"/>
    <property type="project" value="UniProtKB-UniRule"/>
</dbReference>
<dbReference type="GO" id="GO:0000166">
    <property type="term" value="F:nucleotide binding"/>
    <property type="evidence" value="ECO:0007669"/>
    <property type="project" value="UniProtKB-KW"/>
</dbReference>
<dbReference type="GO" id="GO:0006226">
    <property type="term" value="P:dUMP biosynthetic process"/>
    <property type="evidence" value="ECO:0007669"/>
    <property type="project" value="UniProtKB-UniPathway"/>
</dbReference>
<dbReference type="GO" id="GO:0006229">
    <property type="term" value="P:dUTP biosynthetic process"/>
    <property type="evidence" value="ECO:0007669"/>
    <property type="project" value="UniProtKB-UniRule"/>
</dbReference>
<dbReference type="GO" id="GO:0015949">
    <property type="term" value="P:nucleobase-containing small molecule interconversion"/>
    <property type="evidence" value="ECO:0007669"/>
    <property type="project" value="TreeGrafter"/>
</dbReference>
<dbReference type="CDD" id="cd07557">
    <property type="entry name" value="trimeric_dUTPase"/>
    <property type="match status" value="1"/>
</dbReference>
<dbReference type="FunFam" id="2.70.40.10:FF:000001">
    <property type="entry name" value="dCTP deaminase"/>
    <property type="match status" value="1"/>
</dbReference>
<dbReference type="Gene3D" id="2.70.40.10">
    <property type="match status" value="1"/>
</dbReference>
<dbReference type="HAMAP" id="MF_00146">
    <property type="entry name" value="dCTP_deaminase"/>
    <property type="match status" value="1"/>
</dbReference>
<dbReference type="InterPro" id="IPR011962">
    <property type="entry name" value="dCTP_deaminase"/>
</dbReference>
<dbReference type="InterPro" id="IPR036157">
    <property type="entry name" value="dUTPase-like_sf"/>
</dbReference>
<dbReference type="InterPro" id="IPR033704">
    <property type="entry name" value="dUTPase_trimeric"/>
</dbReference>
<dbReference type="NCBIfam" id="TIGR02274">
    <property type="entry name" value="dCTP_deam"/>
    <property type="match status" value="1"/>
</dbReference>
<dbReference type="PANTHER" id="PTHR42680">
    <property type="entry name" value="DCTP DEAMINASE"/>
    <property type="match status" value="1"/>
</dbReference>
<dbReference type="PANTHER" id="PTHR42680:SF3">
    <property type="entry name" value="DCTP DEAMINASE"/>
    <property type="match status" value="1"/>
</dbReference>
<dbReference type="Pfam" id="PF22769">
    <property type="entry name" value="DCD"/>
    <property type="match status" value="1"/>
</dbReference>
<dbReference type="SUPFAM" id="SSF51283">
    <property type="entry name" value="dUTPase-like"/>
    <property type="match status" value="1"/>
</dbReference>
<keyword id="KW-0378">Hydrolase</keyword>
<keyword id="KW-0546">Nucleotide metabolism</keyword>
<keyword id="KW-0547">Nucleotide-binding</keyword>
<accession>Q3KH11</accession>
<name>DCD_PSEPF</name>
<evidence type="ECO:0000255" key="1">
    <source>
        <dbReference type="HAMAP-Rule" id="MF_00146"/>
    </source>
</evidence>
<comment type="function">
    <text evidence="1">Catalyzes the deamination of dCTP to dUTP.</text>
</comment>
<comment type="catalytic activity">
    <reaction evidence="1">
        <text>dCTP + H2O + H(+) = dUTP + NH4(+)</text>
        <dbReference type="Rhea" id="RHEA:22680"/>
        <dbReference type="ChEBI" id="CHEBI:15377"/>
        <dbReference type="ChEBI" id="CHEBI:15378"/>
        <dbReference type="ChEBI" id="CHEBI:28938"/>
        <dbReference type="ChEBI" id="CHEBI:61481"/>
        <dbReference type="ChEBI" id="CHEBI:61555"/>
        <dbReference type="EC" id="3.5.4.13"/>
    </reaction>
</comment>
<comment type="pathway">
    <text evidence="1">Pyrimidine metabolism; dUMP biosynthesis; dUMP from dCTP (dUTP route): step 1/2.</text>
</comment>
<comment type="subunit">
    <text evidence="1">Homotrimer.</text>
</comment>
<comment type="similarity">
    <text evidence="1">Belongs to the dCTP deaminase family.</text>
</comment>
<proteinExistence type="inferred from homology"/>
<feature type="chain" id="PRO_1000009788" description="dCTP deaminase">
    <location>
        <begin position="1"/>
        <end position="188"/>
    </location>
</feature>
<feature type="active site" description="Proton donor/acceptor" evidence="1">
    <location>
        <position position="137"/>
    </location>
</feature>
<feature type="binding site" evidence="1">
    <location>
        <begin position="111"/>
        <end position="116"/>
    </location>
    <ligand>
        <name>dCTP</name>
        <dbReference type="ChEBI" id="CHEBI:61481"/>
    </ligand>
</feature>
<feature type="binding site" evidence="1">
    <location>
        <begin position="135"/>
        <end position="137"/>
    </location>
    <ligand>
        <name>dCTP</name>
        <dbReference type="ChEBI" id="CHEBI:61481"/>
    </ligand>
</feature>
<feature type="binding site" evidence="1">
    <location>
        <position position="156"/>
    </location>
    <ligand>
        <name>dCTP</name>
        <dbReference type="ChEBI" id="CHEBI:61481"/>
    </ligand>
</feature>
<feature type="binding site" evidence="1">
    <location>
        <position position="170"/>
    </location>
    <ligand>
        <name>dCTP</name>
        <dbReference type="ChEBI" id="CHEBI:61481"/>
    </ligand>
</feature>
<feature type="binding site" evidence="1">
    <location>
        <position position="180"/>
    </location>
    <ligand>
        <name>dCTP</name>
        <dbReference type="ChEBI" id="CHEBI:61481"/>
    </ligand>
</feature>